<dbReference type="EMBL" id="X53059">
    <property type="protein sequence ID" value="CAA37227.1"/>
    <property type="molecule type" value="mRNA"/>
</dbReference>
<dbReference type="EMBL" id="X59943">
    <property type="protein sequence ID" value="CAA42568.1"/>
    <property type="molecule type" value="Genomic_DNA"/>
</dbReference>
<dbReference type="EMBL" id="AE014134">
    <property type="protein sequence ID" value="AAF51034.1"/>
    <property type="molecule type" value="Genomic_DNA"/>
</dbReference>
<dbReference type="RefSeq" id="NP_001260018.1">
    <property type="nucleotide sequence ID" value="NM_001273089.2"/>
</dbReference>
<dbReference type="RefSeq" id="NP_476776.1">
    <property type="nucleotide sequence ID" value="NM_057428.4"/>
</dbReference>
<dbReference type="PDB" id="4V6W">
    <property type="method" value="EM"/>
    <property type="resolution" value="6.00 A"/>
    <property type="chains" value="Cm=77-128"/>
</dbReference>
<dbReference type="PDB" id="6XU6">
    <property type="method" value="EM"/>
    <property type="resolution" value="3.50 A"/>
    <property type="chains" value="Cm=77-128"/>
</dbReference>
<dbReference type="PDB" id="6XU7">
    <property type="method" value="EM"/>
    <property type="resolution" value="4.90 A"/>
    <property type="chains" value="Cm=77-128"/>
</dbReference>
<dbReference type="PDB" id="6XU8">
    <property type="method" value="EM"/>
    <property type="resolution" value="3.00 A"/>
    <property type="chains" value="Cm=77-128"/>
</dbReference>
<dbReference type="PDBsum" id="4V6W"/>
<dbReference type="PDBsum" id="6XU6"/>
<dbReference type="PDBsum" id="6XU7"/>
<dbReference type="PDBsum" id="6XU8"/>
<dbReference type="EMDB" id="EMD-10622"/>
<dbReference type="EMDB" id="EMD-10623"/>
<dbReference type="EMDB" id="EMD-10624"/>
<dbReference type="SMR" id="P18101"/>
<dbReference type="BioGRID" id="59826">
    <property type="interactions" value="103"/>
</dbReference>
<dbReference type="FunCoup" id="P18101">
    <property type="interactions" value="1901"/>
</dbReference>
<dbReference type="IntAct" id="P18101">
    <property type="interactions" value="3"/>
</dbReference>
<dbReference type="STRING" id="7227.FBpp0306837"/>
<dbReference type="PaxDb" id="7227-FBpp0077159"/>
<dbReference type="ABCD" id="P18101">
    <property type="antibodies" value="3 sequenced antibodies"/>
</dbReference>
<dbReference type="DNASU" id="33629"/>
<dbReference type="EnsemblMetazoa" id="FBtr0077470">
    <property type="protein sequence ID" value="FBpp0077159"/>
    <property type="gene ID" value="FBgn0003941"/>
</dbReference>
<dbReference type="EnsemblMetazoa" id="FBtr0334787">
    <property type="protein sequence ID" value="FBpp0306837"/>
    <property type="gene ID" value="FBgn0003941"/>
</dbReference>
<dbReference type="GeneID" id="33629"/>
<dbReference type="KEGG" id="dme:Dmel_CG2960"/>
<dbReference type="AGR" id="FB:FBgn0003941"/>
<dbReference type="CTD" id="33629"/>
<dbReference type="FlyBase" id="FBgn0003941">
    <property type="gene designation" value="RpL40"/>
</dbReference>
<dbReference type="VEuPathDB" id="VectorBase:FBgn0003941"/>
<dbReference type="eggNOG" id="KOG0003">
    <property type="taxonomic scope" value="Eukaryota"/>
</dbReference>
<dbReference type="HOGENOM" id="CLU_010412_3_4_1"/>
<dbReference type="InParanoid" id="P18101"/>
<dbReference type="OMA" id="CGRCSQL"/>
<dbReference type="OrthoDB" id="428577at2759"/>
<dbReference type="PhylomeDB" id="P18101"/>
<dbReference type="Reactome" id="R-DME-209360">
    <property type="pathway name" value="Ubiquitination and proteolysis of phosphorylated CI"/>
</dbReference>
<dbReference type="Reactome" id="R-DME-209447">
    <property type="pathway name" value="Activation of the IkappaB kinase complex, KEY:IRD5 dimer:KEY"/>
</dbReference>
<dbReference type="Reactome" id="R-DME-209461">
    <property type="pathway name" value="Ubiquitination and degradation of phosphorylated ARM"/>
</dbReference>
<dbReference type="Reactome" id="R-DME-432395">
    <property type="pathway name" value="Degradation of TIM"/>
</dbReference>
<dbReference type="Reactome" id="R-DME-432524">
    <property type="pathway name" value="Degradation of PER"/>
</dbReference>
<dbReference type="Reactome" id="R-DME-538864">
    <property type="pathway name" value="Degradation of CRY"/>
</dbReference>
<dbReference type="SignaLink" id="P18101"/>
<dbReference type="BioGRID-ORCS" id="33629">
    <property type="hits" value="1 hit in 1 CRISPR screen"/>
</dbReference>
<dbReference type="ChiTaRS" id="RpL40">
    <property type="organism name" value="fly"/>
</dbReference>
<dbReference type="GenomeRNAi" id="33629"/>
<dbReference type="PRO" id="PR:P18101"/>
<dbReference type="Proteomes" id="UP000000803">
    <property type="component" value="Chromosome 2L"/>
</dbReference>
<dbReference type="Bgee" id="FBgn0003941">
    <property type="expression patterns" value="Expressed in T neuron T5b (Drosophila) in embryonic/larval optic lobe (Drosophila) and 296 other cell types or tissues"/>
</dbReference>
<dbReference type="ExpressionAtlas" id="P18101">
    <property type="expression patterns" value="baseline and differential"/>
</dbReference>
<dbReference type="GO" id="GO:0005737">
    <property type="term" value="C:cytoplasm"/>
    <property type="evidence" value="ECO:0000318"/>
    <property type="project" value="GO_Central"/>
</dbReference>
<dbReference type="GO" id="GO:0005829">
    <property type="term" value="C:cytosol"/>
    <property type="evidence" value="ECO:0000304"/>
    <property type="project" value="Reactome"/>
</dbReference>
<dbReference type="GO" id="GO:0022625">
    <property type="term" value="C:cytosolic large ribosomal subunit"/>
    <property type="evidence" value="ECO:0000314"/>
    <property type="project" value="FlyBase"/>
</dbReference>
<dbReference type="GO" id="GO:0005634">
    <property type="term" value="C:nucleus"/>
    <property type="evidence" value="ECO:0000318"/>
    <property type="project" value="GO_Central"/>
</dbReference>
<dbReference type="GO" id="GO:0031386">
    <property type="term" value="F:protein tag activity"/>
    <property type="evidence" value="ECO:0000250"/>
    <property type="project" value="FlyBase"/>
</dbReference>
<dbReference type="GO" id="GO:0003735">
    <property type="term" value="F:structural constituent of ribosome"/>
    <property type="evidence" value="ECO:0000318"/>
    <property type="project" value="GO_Central"/>
</dbReference>
<dbReference type="GO" id="GO:0031625">
    <property type="term" value="F:ubiquitin protein ligase binding"/>
    <property type="evidence" value="ECO:0000318"/>
    <property type="project" value="GO_Central"/>
</dbReference>
<dbReference type="GO" id="GO:0002181">
    <property type="term" value="P:cytoplasmic translation"/>
    <property type="evidence" value="ECO:0000304"/>
    <property type="project" value="FlyBase"/>
</dbReference>
<dbReference type="GO" id="GO:0019941">
    <property type="term" value="P:modification-dependent protein catabolic process"/>
    <property type="evidence" value="ECO:0000318"/>
    <property type="project" value="GO_Central"/>
</dbReference>
<dbReference type="GO" id="GO:0036211">
    <property type="term" value="P:protein modification process"/>
    <property type="evidence" value="ECO:0000250"/>
    <property type="project" value="FlyBase"/>
</dbReference>
<dbReference type="GO" id="GO:0016567">
    <property type="term" value="P:protein ubiquitination"/>
    <property type="evidence" value="ECO:0000250"/>
    <property type="project" value="FlyBase"/>
</dbReference>
<dbReference type="GO" id="GO:0006412">
    <property type="term" value="P:translation"/>
    <property type="evidence" value="ECO:0000304"/>
    <property type="project" value="FlyBase"/>
</dbReference>
<dbReference type="GO" id="GO:0006511">
    <property type="term" value="P:ubiquitin-dependent protein catabolic process"/>
    <property type="evidence" value="ECO:0000250"/>
    <property type="project" value="FlyBase"/>
</dbReference>
<dbReference type="CDD" id="cd01803">
    <property type="entry name" value="Ubl_ubiquitin"/>
    <property type="match status" value="1"/>
</dbReference>
<dbReference type="FunFam" id="3.10.20.90:FF:000014">
    <property type="entry name" value="Ubiquitin-60S ribosomal L40 fusion"/>
    <property type="match status" value="1"/>
</dbReference>
<dbReference type="FunFam" id="4.10.1060.50:FF:000001">
    <property type="entry name" value="ubiquitin-60S ribosomal protein L40"/>
    <property type="match status" value="1"/>
</dbReference>
<dbReference type="Gene3D" id="4.10.1060.50">
    <property type="match status" value="1"/>
</dbReference>
<dbReference type="Gene3D" id="3.10.20.90">
    <property type="entry name" value="Phosphatidylinositol 3-kinase Catalytic Subunit, Chain A, domain 1"/>
    <property type="match status" value="1"/>
</dbReference>
<dbReference type="InterPro" id="IPR001975">
    <property type="entry name" value="Ribosomal_eL40_dom"/>
</dbReference>
<dbReference type="InterPro" id="IPR038587">
    <property type="entry name" value="Ribosomal_eL40_sf"/>
</dbReference>
<dbReference type="InterPro" id="IPR000626">
    <property type="entry name" value="Ubiquitin-like_dom"/>
</dbReference>
<dbReference type="InterPro" id="IPR029071">
    <property type="entry name" value="Ubiquitin-like_domsf"/>
</dbReference>
<dbReference type="InterPro" id="IPR019954">
    <property type="entry name" value="Ubiquitin_CS"/>
</dbReference>
<dbReference type="InterPro" id="IPR019956">
    <property type="entry name" value="Ubiquitin_dom"/>
</dbReference>
<dbReference type="InterPro" id="IPR050158">
    <property type="entry name" value="Ubiquitin_ubiquitin-like"/>
</dbReference>
<dbReference type="PANTHER" id="PTHR10666">
    <property type="entry name" value="UBIQUITIN"/>
    <property type="match status" value="1"/>
</dbReference>
<dbReference type="Pfam" id="PF01020">
    <property type="entry name" value="Ribosomal_L40e"/>
    <property type="match status" value="1"/>
</dbReference>
<dbReference type="Pfam" id="PF00240">
    <property type="entry name" value="ubiquitin"/>
    <property type="match status" value="1"/>
</dbReference>
<dbReference type="PRINTS" id="PR00348">
    <property type="entry name" value="UBIQUITIN"/>
</dbReference>
<dbReference type="SMART" id="SM01377">
    <property type="entry name" value="Ribosomal_L40e"/>
    <property type="match status" value="1"/>
</dbReference>
<dbReference type="SMART" id="SM00213">
    <property type="entry name" value="UBQ"/>
    <property type="match status" value="1"/>
</dbReference>
<dbReference type="SUPFAM" id="SSF54236">
    <property type="entry name" value="Ubiquitin-like"/>
    <property type="match status" value="1"/>
</dbReference>
<dbReference type="PROSITE" id="PS00299">
    <property type="entry name" value="UBIQUITIN_1"/>
    <property type="match status" value="1"/>
</dbReference>
<dbReference type="PROSITE" id="PS50053">
    <property type="entry name" value="UBIQUITIN_2"/>
    <property type="match status" value="1"/>
</dbReference>
<feature type="chain" id="PRO_0000396442" description="Ubiquitin">
    <location>
        <begin position="1"/>
        <end position="76"/>
    </location>
</feature>
<feature type="chain" id="PRO_0000396443" description="Large ribosomal subunit protein eL40">
    <location>
        <begin position="77"/>
        <end position="128"/>
    </location>
</feature>
<feature type="domain" description="Ubiquitin-like" evidence="2">
    <location>
        <begin position="1"/>
        <end position="76"/>
    </location>
</feature>
<feature type="site" description="Interacts with activating enzyme">
    <location>
        <position position="54"/>
    </location>
</feature>
<feature type="site" description="Essential for function">
    <location>
        <position position="68"/>
    </location>
</feature>
<feature type="site" description="Interacts with activating enzyme">
    <location>
        <position position="72"/>
    </location>
</feature>
<feature type="cross-link" description="Glycyl lysine isopeptide (Lys-Gly) (interchain with G-Cter in ubiquitin)">
    <location>
        <position position="48"/>
    </location>
</feature>
<feature type="cross-link" description="Glycyl lysine isopeptide (Gly-Lys) (interchain with K-? in acceptor proteins)">
    <location>
        <position position="76"/>
    </location>
</feature>
<protein>
    <recommendedName>
        <fullName evidence="3">Ubiquitin-ribosomal protein eL40 fusion protein</fullName>
    </recommendedName>
    <alternativeName>
        <fullName>CEP52</fullName>
    </alternativeName>
    <component>
        <recommendedName>
            <fullName>Ubiquitin</fullName>
        </recommendedName>
    </component>
    <component>
        <recommendedName>
            <fullName evidence="3">Large ribosomal subunit protein eL40</fullName>
        </recommendedName>
        <alternativeName>
            <fullName>60S ribosomal protein L40</fullName>
        </alternativeName>
    </component>
</protein>
<comment type="function">
    <molecule>Ubiquitin</molecule>
    <text evidence="1">Exists either covalently attached to another protein, or free (unanchored). When covalently bound, it is conjugated to target proteins via an isopeptide bond either as a monomer (monoubiquitin), a polymer linked via different Lys residues of the ubiquitin (polyubiquitin chains) or a linear polymer linked via the initiator Met of the ubiquitin (linear polyubiquitin chains). Polyubiquitin chains, when attached to a target protein, have different functions depending on the Lys residue of the ubiquitin that is linked: Lys-48-linked is involved in protein degradation via the proteasome. Linear polymer chains formed via attachment by the initiator Met lead to cell signaling. Ubiquitin is usually conjugated to Lys residues of target proteins, however, in rare cases, conjugation to Cys or Ser residues has been observed. When polyubiquitin is free (unanchored-polyubiquitin), it also has distinct roles, such as in activation of protein kinases, and in signaling (By similarity).</text>
</comment>
<comment type="function">
    <molecule>Large ribosomal subunit protein eL40</molecule>
    <text evidence="1">Component of the 60S subunit of the ribosome.</text>
</comment>
<comment type="subunit">
    <molecule>Large ribosomal subunit protein eL40</molecule>
    <text evidence="1">Part of the 60S ribosomal subunit.</text>
</comment>
<comment type="subcellular location">
    <molecule>Ubiquitin</molecule>
    <subcellularLocation>
        <location evidence="1">Cytoplasm</location>
    </subcellularLocation>
    <subcellularLocation>
        <location evidence="1">Nucleus</location>
    </subcellularLocation>
</comment>
<comment type="subcellular location">
    <molecule>Large ribosomal subunit protein eL40</molecule>
    <subcellularLocation>
        <location evidence="1">Cytoplasm</location>
    </subcellularLocation>
</comment>
<comment type="miscellaneous">
    <text>In Drosophila ubiquitin is encoded by 3 different genes. RpL40 and RpS27A genes code for a single copy of ubiquitin fused to the ribosomal proteins eL40 and eS31, respectively. Ubi-p63E gene codes for a polyubiquitin precursor with 10 exact head to tail repeats.</text>
</comment>
<comment type="miscellaneous">
    <text>For a better understanding, features related to ubiquitin are only indicated for the first chain.</text>
</comment>
<comment type="similarity">
    <text evidence="3">In the N-terminal section; belongs to the ubiquitin family.</text>
</comment>
<comment type="similarity">
    <text evidence="3">In the C-terminal section; belongs to the eukaryotic ribosomal protein eL40 family.</text>
</comment>
<evidence type="ECO:0000250" key="1"/>
<evidence type="ECO:0000255" key="2">
    <source>
        <dbReference type="PROSITE-ProRule" id="PRU00214"/>
    </source>
</evidence>
<evidence type="ECO:0000305" key="3"/>
<gene>
    <name type="primary">RpL40</name>
    <name type="synonym">Ubi-f</name>
    <name type="synonym">UBI-F52</name>
    <name type="ORF">CG2960</name>
</gene>
<reference key="1">
    <citation type="journal article" date="1990" name="Nucleic Acids Res.">
        <title>Sequence of a Drosophila cDNA encoding a ubiquitin gene fusion to a 52-aa ribosomal protein tail.</title>
        <authorList>
            <person name="Cabrera y Poch H.L."/>
            <person name="Arribas C."/>
            <person name="Izquierdo M."/>
        </authorList>
    </citation>
    <scope>NUCLEOTIDE SEQUENCE [MRNA]</scope>
    <source>
        <strain>Canton-S</strain>
        <tissue>Larva</tissue>
    </source>
</reference>
<reference key="2">
    <citation type="journal article" date="1992" name="Biochem. J.">
        <title>Structure and expression of the Drosophila ubiquitin-52-amino-acid fusion-protein gene.</title>
        <authorList>
            <person name="Cabrera H.L."/>
            <person name="Barrio R."/>
            <person name="Arribas C."/>
        </authorList>
    </citation>
    <scope>NUCLEOTIDE SEQUENCE [GENOMIC DNA]</scope>
    <source>
        <strain>Canton-S</strain>
    </source>
</reference>
<reference key="3">
    <citation type="journal article" date="2000" name="Science">
        <title>The genome sequence of Drosophila melanogaster.</title>
        <authorList>
            <person name="Adams M.D."/>
            <person name="Celniker S.E."/>
            <person name="Holt R.A."/>
            <person name="Evans C.A."/>
            <person name="Gocayne J.D."/>
            <person name="Amanatides P.G."/>
            <person name="Scherer S.E."/>
            <person name="Li P.W."/>
            <person name="Hoskins R.A."/>
            <person name="Galle R.F."/>
            <person name="George R.A."/>
            <person name="Lewis S.E."/>
            <person name="Richards S."/>
            <person name="Ashburner M."/>
            <person name="Henderson S.N."/>
            <person name="Sutton G.G."/>
            <person name="Wortman J.R."/>
            <person name="Yandell M.D."/>
            <person name="Zhang Q."/>
            <person name="Chen L.X."/>
            <person name="Brandon R.C."/>
            <person name="Rogers Y.-H.C."/>
            <person name="Blazej R.G."/>
            <person name="Champe M."/>
            <person name="Pfeiffer B.D."/>
            <person name="Wan K.H."/>
            <person name="Doyle C."/>
            <person name="Baxter E.G."/>
            <person name="Helt G."/>
            <person name="Nelson C.R."/>
            <person name="Miklos G.L.G."/>
            <person name="Abril J.F."/>
            <person name="Agbayani A."/>
            <person name="An H.-J."/>
            <person name="Andrews-Pfannkoch C."/>
            <person name="Baldwin D."/>
            <person name="Ballew R.M."/>
            <person name="Basu A."/>
            <person name="Baxendale J."/>
            <person name="Bayraktaroglu L."/>
            <person name="Beasley E.M."/>
            <person name="Beeson K.Y."/>
            <person name="Benos P.V."/>
            <person name="Berman B.P."/>
            <person name="Bhandari D."/>
            <person name="Bolshakov S."/>
            <person name="Borkova D."/>
            <person name="Botchan M.R."/>
            <person name="Bouck J."/>
            <person name="Brokstein P."/>
            <person name="Brottier P."/>
            <person name="Burtis K.C."/>
            <person name="Busam D.A."/>
            <person name="Butler H."/>
            <person name="Cadieu E."/>
            <person name="Center A."/>
            <person name="Chandra I."/>
            <person name="Cherry J.M."/>
            <person name="Cawley S."/>
            <person name="Dahlke C."/>
            <person name="Davenport L.B."/>
            <person name="Davies P."/>
            <person name="de Pablos B."/>
            <person name="Delcher A."/>
            <person name="Deng Z."/>
            <person name="Mays A.D."/>
            <person name="Dew I."/>
            <person name="Dietz S.M."/>
            <person name="Dodson K."/>
            <person name="Doup L.E."/>
            <person name="Downes M."/>
            <person name="Dugan-Rocha S."/>
            <person name="Dunkov B.C."/>
            <person name="Dunn P."/>
            <person name="Durbin K.J."/>
            <person name="Evangelista C.C."/>
            <person name="Ferraz C."/>
            <person name="Ferriera S."/>
            <person name="Fleischmann W."/>
            <person name="Fosler C."/>
            <person name="Gabrielian A.E."/>
            <person name="Garg N.S."/>
            <person name="Gelbart W.M."/>
            <person name="Glasser K."/>
            <person name="Glodek A."/>
            <person name="Gong F."/>
            <person name="Gorrell J.H."/>
            <person name="Gu Z."/>
            <person name="Guan P."/>
            <person name="Harris M."/>
            <person name="Harris N.L."/>
            <person name="Harvey D.A."/>
            <person name="Heiman T.J."/>
            <person name="Hernandez J.R."/>
            <person name="Houck J."/>
            <person name="Hostin D."/>
            <person name="Houston K.A."/>
            <person name="Howland T.J."/>
            <person name="Wei M.-H."/>
            <person name="Ibegwam C."/>
            <person name="Jalali M."/>
            <person name="Kalush F."/>
            <person name="Karpen G.H."/>
            <person name="Ke Z."/>
            <person name="Kennison J.A."/>
            <person name="Ketchum K.A."/>
            <person name="Kimmel B.E."/>
            <person name="Kodira C.D."/>
            <person name="Kraft C.L."/>
            <person name="Kravitz S."/>
            <person name="Kulp D."/>
            <person name="Lai Z."/>
            <person name="Lasko P."/>
            <person name="Lei Y."/>
            <person name="Levitsky A.A."/>
            <person name="Li J.H."/>
            <person name="Li Z."/>
            <person name="Liang Y."/>
            <person name="Lin X."/>
            <person name="Liu X."/>
            <person name="Mattei B."/>
            <person name="McIntosh T.C."/>
            <person name="McLeod M.P."/>
            <person name="McPherson D."/>
            <person name="Merkulov G."/>
            <person name="Milshina N.V."/>
            <person name="Mobarry C."/>
            <person name="Morris J."/>
            <person name="Moshrefi A."/>
            <person name="Mount S.M."/>
            <person name="Moy M."/>
            <person name="Murphy B."/>
            <person name="Murphy L."/>
            <person name="Muzny D.M."/>
            <person name="Nelson D.L."/>
            <person name="Nelson D.R."/>
            <person name="Nelson K.A."/>
            <person name="Nixon K."/>
            <person name="Nusskern D.R."/>
            <person name="Pacleb J.M."/>
            <person name="Palazzolo M."/>
            <person name="Pittman G.S."/>
            <person name="Pan S."/>
            <person name="Pollard J."/>
            <person name="Puri V."/>
            <person name="Reese M.G."/>
            <person name="Reinert K."/>
            <person name="Remington K."/>
            <person name="Saunders R.D.C."/>
            <person name="Scheeler F."/>
            <person name="Shen H."/>
            <person name="Shue B.C."/>
            <person name="Siden-Kiamos I."/>
            <person name="Simpson M."/>
            <person name="Skupski M.P."/>
            <person name="Smith T.J."/>
            <person name="Spier E."/>
            <person name="Spradling A.C."/>
            <person name="Stapleton M."/>
            <person name="Strong R."/>
            <person name="Sun E."/>
            <person name="Svirskas R."/>
            <person name="Tector C."/>
            <person name="Turner R."/>
            <person name="Venter E."/>
            <person name="Wang A.H."/>
            <person name="Wang X."/>
            <person name="Wang Z.-Y."/>
            <person name="Wassarman D.A."/>
            <person name="Weinstock G.M."/>
            <person name="Weissenbach J."/>
            <person name="Williams S.M."/>
            <person name="Woodage T."/>
            <person name="Worley K.C."/>
            <person name="Wu D."/>
            <person name="Yang S."/>
            <person name="Yao Q.A."/>
            <person name="Ye J."/>
            <person name="Yeh R.-F."/>
            <person name="Zaveri J.S."/>
            <person name="Zhan M."/>
            <person name="Zhang G."/>
            <person name="Zhao Q."/>
            <person name="Zheng L."/>
            <person name="Zheng X.H."/>
            <person name="Zhong F.N."/>
            <person name="Zhong W."/>
            <person name="Zhou X."/>
            <person name="Zhu S.C."/>
            <person name="Zhu X."/>
            <person name="Smith H.O."/>
            <person name="Gibbs R.A."/>
            <person name="Myers E.W."/>
            <person name="Rubin G.M."/>
            <person name="Venter J.C."/>
        </authorList>
    </citation>
    <scope>NUCLEOTIDE SEQUENCE [LARGE SCALE GENOMIC DNA]</scope>
    <source>
        <strain>Berkeley</strain>
    </source>
</reference>
<reference key="4">
    <citation type="journal article" date="2002" name="Genome Biol.">
        <title>Annotation of the Drosophila melanogaster euchromatic genome: a systematic review.</title>
        <authorList>
            <person name="Misra S."/>
            <person name="Crosby M.A."/>
            <person name="Mungall C.J."/>
            <person name="Matthews B.B."/>
            <person name="Campbell K.S."/>
            <person name="Hradecky P."/>
            <person name="Huang Y."/>
            <person name="Kaminker J.S."/>
            <person name="Millburn G.H."/>
            <person name="Prochnik S.E."/>
            <person name="Smith C.D."/>
            <person name="Tupy J.L."/>
            <person name="Whitfield E.J."/>
            <person name="Bayraktaroglu L."/>
            <person name="Berman B.P."/>
            <person name="Bettencourt B.R."/>
            <person name="Celniker S.E."/>
            <person name="de Grey A.D.N.J."/>
            <person name="Drysdale R.A."/>
            <person name="Harris N.L."/>
            <person name="Richter J."/>
            <person name="Russo S."/>
            <person name="Schroeder A.J."/>
            <person name="Shu S.Q."/>
            <person name="Stapleton M."/>
            <person name="Yamada C."/>
            <person name="Ashburner M."/>
            <person name="Gelbart W.M."/>
            <person name="Rubin G.M."/>
            <person name="Lewis S.E."/>
        </authorList>
    </citation>
    <scope>GENOME REANNOTATION</scope>
    <source>
        <strain>Berkeley</strain>
    </source>
</reference>
<reference key="5">
    <citation type="journal article" date="2013" name="Nature">
        <title>Structures of the human and Drosophila 80S ribosome.</title>
        <authorList>
            <person name="Anger A.M."/>
            <person name="Armache J.P."/>
            <person name="Berninghausen O."/>
            <person name="Habeck M."/>
            <person name="Subklewe M."/>
            <person name="Wilson D.N."/>
            <person name="Beckmann R."/>
        </authorList>
    </citation>
    <scope>STRUCTURE BY ELECTRON MICROSCOPY (6.0 ANGSTROMS) OF THE 80S RIBOSOME</scope>
</reference>
<accession>P18101</accession>
<accession>P68198</accession>
<accession>Q0E8I1</accession>
<accession>Q9VKW6</accession>
<accession>Q9VQX7</accession>
<accession>Q9VZL4</accession>
<name>RL40_DROME</name>
<organism>
    <name type="scientific">Drosophila melanogaster</name>
    <name type="common">Fruit fly</name>
    <dbReference type="NCBI Taxonomy" id="7227"/>
    <lineage>
        <taxon>Eukaryota</taxon>
        <taxon>Metazoa</taxon>
        <taxon>Ecdysozoa</taxon>
        <taxon>Arthropoda</taxon>
        <taxon>Hexapoda</taxon>
        <taxon>Insecta</taxon>
        <taxon>Pterygota</taxon>
        <taxon>Neoptera</taxon>
        <taxon>Endopterygota</taxon>
        <taxon>Diptera</taxon>
        <taxon>Brachycera</taxon>
        <taxon>Muscomorpha</taxon>
        <taxon>Ephydroidea</taxon>
        <taxon>Drosophilidae</taxon>
        <taxon>Drosophila</taxon>
        <taxon>Sophophora</taxon>
    </lineage>
</organism>
<keyword id="KW-0002">3D-structure</keyword>
<keyword id="KW-0963">Cytoplasm</keyword>
<keyword id="KW-1017">Isopeptide bond</keyword>
<keyword id="KW-0539">Nucleus</keyword>
<keyword id="KW-1185">Reference proteome</keyword>
<keyword id="KW-0687">Ribonucleoprotein</keyword>
<keyword id="KW-0689">Ribosomal protein</keyword>
<keyword id="KW-0832">Ubl conjugation</keyword>
<sequence length="128" mass="14729">MQIFVKTLTGKTITLEVEPSDTIENVKAKIQDKEGIPPDQQRLIFAGKQLEDGRTLSDYNIQKESTLHLVLRLRGGIIEPSLRILAQKYNCDKMICRKCYARLHPRATNCRKKKCGHTNNLRPKKKLK</sequence>
<proteinExistence type="evidence at protein level"/>